<name>RL27_LEGPC</name>
<gene>
    <name evidence="1" type="primary">rpmA</name>
    <name type="ordered locus">LPC_0489</name>
</gene>
<sequence length="92" mass="10099">MAHKKAGGSTRNGRDSNPKYLGVKRFGGQFVNAGEIIVRQRGTRFHPGPGVGCGRDHTLYALVEGLVQFTTKGEKNRKYVTILPEQREEAAS</sequence>
<reference key="1">
    <citation type="submission" date="2006-11" db="EMBL/GenBank/DDBJ databases">
        <title>Identification and characterization of a new conjugation/ type IVA secretion system (trb/tra) of L. pneumophila Corby localized on a mobile genomic island.</title>
        <authorList>
            <person name="Gloeckner G."/>
            <person name="Albert-Weissenberger C."/>
            <person name="Weinmann E."/>
            <person name="Jacobi S."/>
            <person name="Schunder E."/>
            <person name="Steinert M."/>
            <person name="Buchrieser C."/>
            <person name="Hacker J."/>
            <person name="Heuner K."/>
        </authorList>
    </citation>
    <scope>NUCLEOTIDE SEQUENCE [LARGE SCALE GENOMIC DNA]</scope>
    <source>
        <strain>Corby</strain>
    </source>
</reference>
<protein>
    <recommendedName>
        <fullName evidence="1">Large ribosomal subunit protein bL27</fullName>
    </recommendedName>
    <alternativeName>
        <fullName evidence="3">50S ribosomal protein L27</fullName>
    </alternativeName>
</protein>
<keyword id="KW-0687">Ribonucleoprotein</keyword>
<keyword id="KW-0689">Ribosomal protein</keyword>
<proteinExistence type="inferred from homology"/>
<organism>
    <name type="scientific">Legionella pneumophila (strain Corby)</name>
    <dbReference type="NCBI Taxonomy" id="400673"/>
    <lineage>
        <taxon>Bacteria</taxon>
        <taxon>Pseudomonadati</taxon>
        <taxon>Pseudomonadota</taxon>
        <taxon>Gammaproteobacteria</taxon>
        <taxon>Legionellales</taxon>
        <taxon>Legionellaceae</taxon>
        <taxon>Legionella</taxon>
    </lineage>
</organism>
<evidence type="ECO:0000255" key="1">
    <source>
        <dbReference type="HAMAP-Rule" id="MF_00539"/>
    </source>
</evidence>
<evidence type="ECO:0000256" key="2">
    <source>
        <dbReference type="SAM" id="MobiDB-lite"/>
    </source>
</evidence>
<evidence type="ECO:0000305" key="3"/>
<dbReference type="EMBL" id="CP000675">
    <property type="protein sequence ID" value="ABQ54476.1"/>
    <property type="molecule type" value="Genomic_DNA"/>
</dbReference>
<dbReference type="RefSeq" id="WP_010948350.1">
    <property type="nucleotide sequence ID" value="NZ_JAPMSS010000010.1"/>
</dbReference>
<dbReference type="SMR" id="A5IAS6"/>
<dbReference type="GeneID" id="57036649"/>
<dbReference type="KEGG" id="lpc:LPC_0489"/>
<dbReference type="HOGENOM" id="CLU_095424_4_1_6"/>
<dbReference type="GO" id="GO:0022625">
    <property type="term" value="C:cytosolic large ribosomal subunit"/>
    <property type="evidence" value="ECO:0007669"/>
    <property type="project" value="TreeGrafter"/>
</dbReference>
<dbReference type="GO" id="GO:0003735">
    <property type="term" value="F:structural constituent of ribosome"/>
    <property type="evidence" value="ECO:0007669"/>
    <property type="project" value="InterPro"/>
</dbReference>
<dbReference type="GO" id="GO:0006412">
    <property type="term" value="P:translation"/>
    <property type="evidence" value="ECO:0007669"/>
    <property type="project" value="UniProtKB-UniRule"/>
</dbReference>
<dbReference type="FunFam" id="2.40.50.100:FF:000001">
    <property type="entry name" value="50S ribosomal protein L27"/>
    <property type="match status" value="1"/>
</dbReference>
<dbReference type="Gene3D" id="2.40.50.100">
    <property type="match status" value="1"/>
</dbReference>
<dbReference type="HAMAP" id="MF_00539">
    <property type="entry name" value="Ribosomal_bL27"/>
    <property type="match status" value="1"/>
</dbReference>
<dbReference type="InterPro" id="IPR001684">
    <property type="entry name" value="Ribosomal_bL27"/>
</dbReference>
<dbReference type="InterPro" id="IPR018261">
    <property type="entry name" value="Ribosomal_bL27_CS"/>
</dbReference>
<dbReference type="NCBIfam" id="TIGR00062">
    <property type="entry name" value="L27"/>
    <property type="match status" value="1"/>
</dbReference>
<dbReference type="PANTHER" id="PTHR15893:SF0">
    <property type="entry name" value="LARGE RIBOSOMAL SUBUNIT PROTEIN BL27M"/>
    <property type="match status" value="1"/>
</dbReference>
<dbReference type="PANTHER" id="PTHR15893">
    <property type="entry name" value="RIBOSOMAL PROTEIN L27"/>
    <property type="match status" value="1"/>
</dbReference>
<dbReference type="Pfam" id="PF01016">
    <property type="entry name" value="Ribosomal_L27"/>
    <property type="match status" value="1"/>
</dbReference>
<dbReference type="PRINTS" id="PR00063">
    <property type="entry name" value="RIBOSOMALL27"/>
</dbReference>
<dbReference type="SUPFAM" id="SSF110324">
    <property type="entry name" value="Ribosomal L27 protein-like"/>
    <property type="match status" value="1"/>
</dbReference>
<dbReference type="PROSITE" id="PS00831">
    <property type="entry name" value="RIBOSOMAL_L27"/>
    <property type="match status" value="1"/>
</dbReference>
<comment type="similarity">
    <text evidence="1">Belongs to the bacterial ribosomal protein bL27 family.</text>
</comment>
<feature type="chain" id="PRO_1000017505" description="Large ribosomal subunit protein bL27">
    <location>
        <begin position="1"/>
        <end position="92"/>
    </location>
</feature>
<feature type="region of interest" description="Disordered" evidence="2">
    <location>
        <begin position="1"/>
        <end position="20"/>
    </location>
</feature>
<accession>A5IAS6</accession>